<feature type="chain" id="PRO_1000119795" description="Oxygen-dependent coproporphyrinogen-III oxidase">
    <location>
        <begin position="1"/>
        <end position="299"/>
    </location>
</feature>
<feature type="region of interest" description="Important for dimerization" evidence="1">
    <location>
        <begin position="240"/>
        <end position="275"/>
    </location>
</feature>
<feature type="active site" description="Proton donor" evidence="1">
    <location>
        <position position="106"/>
    </location>
</feature>
<feature type="binding site" evidence="1">
    <location>
        <position position="92"/>
    </location>
    <ligand>
        <name>substrate</name>
    </ligand>
</feature>
<feature type="binding site" evidence="1">
    <location>
        <position position="96"/>
    </location>
    <ligand>
        <name>Mn(2+)</name>
        <dbReference type="ChEBI" id="CHEBI:29035"/>
    </ligand>
</feature>
<feature type="binding site" evidence="1">
    <location>
        <position position="106"/>
    </location>
    <ligand>
        <name>Mn(2+)</name>
        <dbReference type="ChEBI" id="CHEBI:29035"/>
    </ligand>
</feature>
<feature type="binding site" evidence="1">
    <location>
        <begin position="108"/>
        <end position="110"/>
    </location>
    <ligand>
        <name>substrate</name>
    </ligand>
</feature>
<feature type="binding site" evidence="1">
    <location>
        <position position="145"/>
    </location>
    <ligand>
        <name>Mn(2+)</name>
        <dbReference type="ChEBI" id="CHEBI:29035"/>
    </ligand>
</feature>
<feature type="binding site" evidence="1">
    <location>
        <position position="175"/>
    </location>
    <ligand>
        <name>Mn(2+)</name>
        <dbReference type="ChEBI" id="CHEBI:29035"/>
    </ligand>
</feature>
<feature type="binding site" evidence="1">
    <location>
        <begin position="258"/>
        <end position="260"/>
    </location>
    <ligand>
        <name>substrate</name>
    </ligand>
</feature>
<feature type="site" description="Important for dimerization" evidence="1">
    <location>
        <position position="175"/>
    </location>
</feature>
<proteinExistence type="inferred from homology"/>
<accession>B7MHT7</accession>
<keyword id="KW-0963">Cytoplasm</keyword>
<keyword id="KW-0350">Heme biosynthesis</keyword>
<keyword id="KW-0464">Manganese</keyword>
<keyword id="KW-0479">Metal-binding</keyword>
<keyword id="KW-0560">Oxidoreductase</keyword>
<keyword id="KW-0627">Porphyrin biosynthesis</keyword>
<keyword id="KW-1185">Reference proteome</keyword>
<reference key="1">
    <citation type="journal article" date="2009" name="PLoS Genet.">
        <title>Organised genome dynamics in the Escherichia coli species results in highly diverse adaptive paths.</title>
        <authorList>
            <person name="Touchon M."/>
            <person name="Hoede C."/>
            <person name="Tenaillon O."/>
            <person name="Barbe V."/>
            <person name="Baeriswyl S."/>
            <person name="Bidet P."/>
            <person name="Bingen E."/>
            <person name="Bonacorsi S."/>
            <person name="Bouchier C."/>
            <person name="Bouvet O."/>
            <person name="Calteau A."/>
            <person name="Chiapello H."/>
            <person name="Clermont O."/>
            <person name="Cruveiller S."/>
            <person name="Danchin A."/>
            <person name="Diard M."/>
            <person name="Dossat C."/>
            <person name="Karoui M.E."/>
            <person name="Frapy E."/>
            <person name="Garry L."/>
            <person name="Ghigo J.M."/>
            <person name="Gilles A.M."/>
            <person name="Johnson J."/>
            <person name="Le Bouguenec C."/>
            <person name="Lescat M."/>
            <person name="Mangenot S."/>
            <person name="Martinez-Jehanne V."/>
            <person name="Matic I."/>
            <person name="Nassif X."/>
            <person name="Oztas S."/>
            <person name="Petit M.A."/>
            <person name="Pichon C."/>
            <person name="Rouy Z."/>
            <person name="Ruf C.S."/>
            <person name="Schneider D."/>
            <person name="Tourret J."/>
            <person name="Vacherie B."/>
            <person name="Vallenet D."/>
            <person name="Medigue C."/>
            <person name="Rocha E.P.C."/>
            <person name="Denamur E."/>
        </authorList>
    </citation>
    <scope>NUCLEOTIDE SEQUENCE [LARGE SCALE GENOMIC DNA]</scope>
    <source>
        <strain>S88 / ExPEC</strain>
    </source>
</reference>
<sequence length="299" mass="34304">MKPDAHQVKQFLLNLQDTICQQLSAVDGAEFVEDSWQREAGGGGRSRVLRNGGVFEQAGVNFSHVHGEAMPASATAHRPELAGRSFEAMGVSLVVHPHNPYVPTSHANVRFFIAEKPGAEPVWWFGGGFDLTPFYGFEEDAIHWHRTARDLCLPFGEDVYPRYKKWCDEYFYLKHRNEQRGIGGLFFDDLNTPDFDHCFAFMQAVGKGYTDAYLPIVERRKAMAYGERERNFQLYRRGRYVEFNLVWDRGTLFGLQTGGRTESILMSMPPLVRWEYDYQPKDGSPEAALSEFIKVRDWV</sequence>
<comment type="function">
    <text evidence="1">Involved in the heme biosynthesis. Catalyzes the aerobic oxidative decarboxylation of propionate groups of rings A and B of coproporphyrinogen-III to yield the vinyl groups in protoporphyrinogen-IX.</text>
</comment>
<comment type="catalytic activity">
    <reaction evidence="1">
        <text>coproporphyrinogen III + O2 + 2 H(+) = protoporphyrinogen IX + 2 CO2 + 2 H2O</text>
        <dbReference type="Rhea" id="RHEA:18257"/>
        <dbReference type="ChEBI" id="CHEBI:15377"/>
        <dbReference type="ChEBI" id="CHEBI:15378"/>
        <dbReference type="ChEBI" id="CHEBI:15379"/>
        <dbReference type="ChEBI" id="CHEBI:16526"/>
        <dbReference type="ChEBI" id="CHEBI:57307"/>
        <dbReference type="ChEBI" id="CHEBI:57309"/>
        <dbReference type="EC" id="1.3.3.3"/>
    </reaction>
</comment>
<comment type="cofactor">
    <cofactor evidence="1">
        <name>Mn(2+)</name>
        <dbReference type="ChEBI" id="CHEBI:29035"/>
    </cofactor>
</comment>
<comment type="pathway">
    <text evidence="1">Porphyrin-containing compound metabolism; protoporphyrin-IX biosynthesis; protoporphyrinogen-IX from coproporphyrinogen-III (O2 route): step 1/1.</text>
</comment>
<comment type="subunit">
    <text evidence="1">Homodimer.</text>
</comment>
<comment type="subcellular location">
    <subcellularLocation>
        <location evidence="1">Cytoplasm</location>
    </subcellularLocation>
</comment>
<comment type="similarity">
    <text evidence="1">Belongs to the aerobic coproporphyrinogen-III oxidase family.</text>
</comment>
<name>HEM6_ECO45</name>
<dbReference type="EC" id="1.3.3.3" evidence="1"/>
<dbReference type="EMBL" id="CU928161">
    <property type="protein sequence ID" value="CAR03895.1"/>
    <property type="molecule type" value="Genomic_DNA"/>
</dbReference>
<dbReference type="RefSeq" id="WP_001298446.1">
    <property type="nucleotide sequence ID" value="NC_011742.1"/>
</dbReference>
<dbReference type="SMR" id="B7MHT7"/>
<dbReference type="KEGG" id="ecz:ECS88_2624"/>
<dbReference type="HOGENOM" id="CLU_026169_0_1_6"/>
<dbReference type="UniPathway" id="UPA00251">
    <property type="reaction ID" value="UER00322"/>
</dbReference>
<dbReference type="Proteomes" id="UP000000747">
    <property type="component" value="Chromosome"/>
</dbReference>
<dbReference type="GO" id="GO:0005737">
    <property type="term" value="C:cytoplasm"/>
    <property type="evidence" value="ECO:0007669"/>
    <property type="project" value="UniProtKB-SubCell"/>
</dbReference>
<dbReference type="GO" id="GO:0004109">
    <property type="term" value="F:coproporphyrinogen oxidase activity"/>
    <property type="evidence" value="ECO:0007669"/>
    <property type="project" value="UniProtKB-UniRule"/>
</dbReference>
<dbReference type="GO" id="GO:0030145">
    <property type="term" value="F:manganese ion binding"/>
    <property type="evidence" value="ECO:0007669"/>
    <property type="project" value="UniProtKB-UniRule"/>
</dbReference>
<dbReference type="GO" id="GO:0042803">
    <property type="term" value="F:protein homodimerization activity"/>
    <property type="evidence" value="ECO:0000250"/>
    <property type="project" value="UniProtKB"/>
</dbReference>
<dbReference type="GO" id="GO:0006782">
    <property type="term" value="P:protoporphyrinogen IX biosynthetic process"/>
    <property type="evidence" value="ECO:0007669"/>
    <property type="project" value="UniProtKB-UniRule"/>
</dbReference>
<dbReference type="FunFam" id="3.40.1500.10:FF:000001">
    <property type="entry name" value="Oxygen-dependent coproporphyrinogen-III oxidase"/>
    <property type="match status" value="1"/>
</dbReference>
<dbReference type="Gene3D" id="3.40.1500.10">
    <property type="entry name" value="Coproporphyrinogen III oxidase, aerobic"/>
    <property type="match status" value="1"/>
</dbReference>
<dbReference type="HAMAP" id="MF_00333">
    <property type="entry name" value="Coprogen_oxidas"/>
    <property type="match status" value="1"/>
</dbReference>
<dbReference type="InterPro" id="IPR001260">
    <property type="entry name" value="Coprogen_oxidase_aer"/>
</dbReference>
<dbReference type="InterPro" id="IPR036406">
    <property type="entry name" value="Coprogen_oxidase_aer_sf"/>
</dbReference>
<dbReference type="InterPro" id="IPR018375">
    <property type="entry name" value="Coprogen_oxidase_CS"/>
</dbReference>
<dbReference type="NCBIfam" id="NF003727">
    <property type="entry name" value="PRK05330.1"/>
    <property type="match status" value="1"/>
</dbReference>
<dbReference type="PANTHER" id="PTHR10755">
    <property type="entry name" value="COPROPORPHYRINOGEN III OXIDASE, MITOCHONDRIAL"/>
    <property type="match status" value="1"/>
</dbReference>
<dbReference type="PANTHER" id="PTHR10755:SF0">
    <property type="entry name" value="OXYGEN-DEPENDENT COPROPORPHYRINOGEN-III OXIDASE, MITOCHONDRIAL"/>
    <property type="match status" value="1"/>
</dbReference>
<dbReference type="Pfam" id="PF01218">
    <property type="entry name" value="Coprogen_oxidas"/>
    <property type="match status" value="1"/>
</dbReference>
<dbReference type="PIRSF" id="PIRSF000166">
    <property type="entry name" value="Coproporphyri_ox"/>
    <property type="match status" value="1"/>
</dbReference>
<dbReference type="PRINTS" id="PR00073">
    <property type="entry name" value="COPRGNOXDASE"/>
</dbReference>
<dbReference type="SUPFAM" id="SSF102886">
    <property type="entry name" value="Coproporphyrinogen III oxidase"/>
    <property type="match status" value="1"/>
</dbReference>
<dbReference type="PROSITE" id="PS01021">
    <property type="entry name" value="COPROGEN_OXIDASE"/>
    <property type="match status" value="1"/>
</dbReference>
<organism>
    <name type="scientific">Escherichia coli O45:K1 (strain S88 / ExPEC)</name>
    <dbReference type="NCBI Taxonomy" id="585035"/>
    <lineage>
        <taxon>Bacteria</taxon>
        <taxon>Pseudomonadati</taxon>
        <taxon>Pseudomonadota</taxon>
        <taxon>Gammaproteobacteria</taxon>
        <taxon>Enterobacterales</taxon>
        <taxon>Enterobacteriaceae</taxon>
        <taxon>Escherichia</taxon>
    </lineage>
</organism>
<gene>
    <name evidence="1" type="primary">hemF</name>
    <name type="ordered locus">ECS88_2624</name>
</gene>
<evidence type="ECO:0000255" key="1">
    <source>
        <dbReference type="HAMAP-Rule" id="MF_00333"/>
    </source>
</evidence>
<protein>
    <recommendedName>
        <fullName evidence="1">Oxygen-dependent coproporphyrinogen-III oxidase</fullName>
        <shortName evidence="1">CPO</shortName>
        <shortName evidence="1">Coprogen oxidase</shortName>
        <shortName evidence="1">Coproporphyrinogenase</shortName>
        <ecNumber evidence="1">1.3.3.3</ecNumber>
    </recommendedName>
</protein>